<keyword id="KW-0687">Ribonucleoprotein</keyword>
<keyword id="KW-0689">Ribosomal protein</keyword>
<keyword id="KW-0694">RNA-binding</keyword>
<keyword id="KW-0699">rRNA-binding</keyword>
<accession>C3LRP7</accession>
<comment type="function">
    <text evidence="1">One of two assembly initiator proteins, it binds directly to the 5'-end of the 23S rRNA, where it nucleates assembly of the 50S subunit.</text>
</comment>
<comment type="function">
    <text evidence="1">One of the proteins that surrounds the polypeptide exit tunnel on the outside of the subunit.</text>
</comment>
<comment type="subunit">
    <text evidence="1">Part of the 50S ribosomal subunit.</text>
</comment>
<comment type="similarity">
    <text evidence="1">Belongs to the universal ribosomal protein uL24 family.</text>
</comment>
<dbReference type="EMBL" id="CP001233">
    <property type="protein sequence ID" value="ACP06802.1"/>
    <property type="molecule type" value="Genomic_DNA"/>
</dbReference>
<dbReference type="RefSeq" id="WP_000729178.1">
    <property type="nucleotide sequence ID" value="NC_012578.1"/>
</dbReference>
<dbReference type="SMR" id="C3LRP7"/>
<dbReference type="GeneID" id="88785144"/>
<dbReference type="KEGG" id="vcm:VCM66_2505"/>
<dbReference type="HOGENOM" id="CLU_093315_2_2_6"/>
<dbReference type="Proteomes" id="UP000001217">
    <property type="component" value="Chromosome I"/>
</dbReference>
<dbReference type="GO" id="GO:1990904">
    <property type="term" value="C:ribonucleoprotein complex"/>
    <property type="evidence" value="ECO:0007669"/>
    <property type="project" value="UniProtKB-KW"/>
</dbReference>
<dbReference type="GO" id="GO:0005840">
    <property type="term" value="C:ribosome"/>
    <property type="evidence" value="ECO:0007669"/>
    <property type="project" value="UniProtKB-KW"/>
</dbReference>
<dbReference type="GO" id="GO:0019843">
    <property type="term" value="F:rRNA binding"/>
    <property type="evidence" value="ECO:0007669"/>
    <property type="project" value="UniProtKB-UniRule"/>
</dbReference>
<dbReference type="GO" id="GO:0003735">
    <property type="term" value="F:structural constituent of ribosome"/>
    <property type="evidence" value="ECO:0007669"/>
    <property type="project" value="InterPro"/>
</dbReference>
<dbReference type="GO" id="GO:0006412">
    <property type="term" value="P:translation"/>
    <property type="evidence" value="ECO:0007669"/>
    <property type="project" value="UniProtKB-UniRule"/>
</dbReference>
<dbReference type="CDD" id="cd06089">
    <property type="entry name" value="KOW_RPL26"/>
    <property type="match status" value="1"/>
</dbReference>
<dbReference type="FunFam" id="2.30.30.30:FF:000004">
    <property type="entry name" value="50S ribosomal protein L24"/>
    <property type="match status" value="1"/>
</dbReference>
<dbReference type="Gene3D" id="2.30.30.30">
    <property type="match status" value="1"/>
</dbReference>
<dbReference type="HAMAP" id="MF_01326_B">
    <property type="entry name" value="Ribosomal_uL24_B"/>
    <property type="match status" value="1"/>
</dbReference>
<dbReference type="InterPro" id="IPR005824">
    <property type="entry name" value="KOW"/>
</dbReference>
<dbReference type="InterPro" id="IPR014722">
    <property type="entry name" value="Rib_uL2_dom2"/>
</dbReference>
<dbReference type="InterPro" id="IPR003256">
    <property type="entry name" value="Ribosomal_uL24"/>
</dbReference>
<dbReference type="InterPro" id="IPR005825">
    <property type="entry name" value="Ribosomal_uL24_CS"/>
</dbReference>
<dbReference type="InterPro" id="IPR041988">
    <property type="entry name" value="Ribosomal_uL24_KOW"/>
</dbReference>
<dbReference type="InterPro" id="IPR008991">
    <property type="entry name" value="Translation_prot_SH3-like_sf"/>
</dbReference>
<dbReference type="NCBIfam" id="TIGR01079">
    <property type="entry name" value="rplX_bact"/>
    <property type="match status" value="1"/>
</dbReference>
<dbReference type="PANTHER" id="PTHR12903">
    <property type="entry name" value="MITOCHONDRIAL RIBOSOMAL PROTEIN L24"/>
    <property type="match status" value="1"/>
</dbReference>
<dbReference type="Pfam" id="PF00467">
    <property type="entry name" value="KOW"/>
    <property type="match status" value="1"/>
</dbReference>
<dbReference type="Pfam" id="PF17136">
    <property type="entry name" value="ribosomal_L24"/>
    <property type="match status" value="1"/>
</dbReference>
<dbReference type="SMART" id="SM00739">
    <property type="entry name" value="KOW"/>
    <property type="match status" value="1"/>
</dbReference>
<dbReference type="SUPFAM" id="SSF50104">
    <property type="entry name" value="Translation proteins SH3-like domain"/>
    <property type="match status" value="1"/>
</dbReference>
<dbReference type="PROSITE" id="PS01108">
    <property type="entry name" value="RIBOSOMAL_L24"/>
    <property type="match status" value="1"/>
</dbReference>
<organism>
    <name type="scientific">Vibrio cholerae serotype O1 (strain M66-2)</name>
    <dbReference type="NCBI Taxonomy" id="579112"/>
    <lineage>
        <taxon>Bacteria</taxon>
        <taxon>Pseudomonadati</taxon>
        <taxon>Pseudomonadota</taxon>
        <taxon>Gammaproteobacteria</taxon>
        <taxon>Vibrionales</taxon>
        <taxon>Vibrionaceae</taxon>
        <taxon>Vibrio</taxon>
    </lineage>
</organism>
<evidence type="ECO:0000255" key="1">
    <source>
        <dbReference type="HAMAP-Rule" id="MF_01326"/>
    </source>
</evidence>
<evidence type="ECO:0000305" key="2"/>
<name>RL24_VIBCM</name>
<feature type="chain" id="PRO_1000165973" description="Large ribosomal subunit protein uL24">
    <location>
        <begin position="1"/>
        <end position="105"/>
    </location>
</feature>
<protein>
    <recommendedName>
        <fullName evidence="1">Large ribosomal subunit protein uL24</fullName>
    </recommendedName>
    <alternativeName>
        <fullName evidence="2">50S ribosomal protein L24</fullName>
    </alternativeName>
</protein>
<reference key="1">
    <citation type="journal article" date="2008" name="PLoS ONE">
        <title>A recalibrated molecular clock and independent origins for the cholera pandemic clones.</title>
        <authorList>
            <person name="Feng L."/>
            <person name="Reeves P.R."/>
            <person name="Lan R."/>
            <person name="Ren Y."/>
            <person name="Gao C."/>
            <person name="Zhou Z."/>
            <person name="Ren Y."/>
            <person name="Cheng J."/>
            <person name="Wang W."/>
            <person name="Wang J."/>
            <person name="Qian W."/>
            <person name="Li D."/>
            <person name="Wang L."/>
        </authorList>
    </citation>
    <scope>NUCLEOTIDE SEQUENCE [LARGE SCALE GENOMIC DNA]</scope>
    <source>
        <strain>M66-2</strain>
    </source>
</reference>
<sequence length="105" mass="11347">MAAKIRQNDEVIVLAGKDKGKKGKVTKVLATGKVIVEGINLVKKHQKPVPAMGVQGGIVEQEAAIDVSNIAIFNAKTGKADRIGFRFEDGKKVRFFKSNNEIVSN</sequence>
<gene>
    <name evidence="1" type="primary">rplX</name>
    <name type="ordered locus">VCM66_2505</name>
</gene>
<proteinExistence type="inferred from homology"/>